<gene>
    <name type="primary">Aamdc</name>
</gene>
<accession>Q8R0P4</accession>
<accession>Q8BH71</accession>
<keyword id="KW-0025">Alternative splicing</keyword>
<keyword id="KW-0963">Cytoplasm</keyword>
<keyword id="KW-1185">Reference proteome</keyword>
<organism>
    <name type="scientific">Mus musculus</name>
    <name type="common">Mouse</name>
    <dbReference type="NCBI Taxonomy" id="10090"/>
    <lineage>
        <taxon>Eukaryota</taxon>
        <taxon>Metazoa</taxon>
        <taxon>Chordata</taxon>
        <taxon>Craniata</taxon>
        <taxon>Vertebrata</taxon>
        <taxon>Euteleostomi</taxon>
        <taxon>Mammalia</taxon>
        <taxon>Eutheria</taxon>
        <taxon>Euarchontoglires</taxon>
        <taxon>Glires</taxon>
        <taxon>Rodentia</taxon>
        <taxon>Myomorpha</taxon>
        <taxon>Muroidea</taxon>
        <taxon>Muridae</taxon>
        <taxon>Murinae</taxon>
        <taxon>Mus</taxon>
        <taxon>Mus</taxon>
    </lineage>
</organism>
<proteinExistence type="evidence at protein level"/>
<evidence type="ECO:0000269" key="1">
    <source>
    </source>
</evidence>
<evidence type="ECO:0000269" key="2">
    <source>
    </source>
</evidence>
<evidence type="ECO:0000303" key="3">
    <source>
    </source>
</evidence>
<evidence type="ECO:0000303" key="4">
    <source>
    </source>
</evidence>
<evidence type="ECO:0000305" key="5"/>
<comment type="function">
    <text evidence="2">May play a role in preadipocyte differentiation and adipogenesis.</text>
</comment>
<comment type="subcellular location">
    <subcellularLocation>
        <location evidence="1">Cytoplasm</location>
    </subcellularLocation>
    <text>Diffuse distribution with some highly concentrated spots around the nucleus.</text>
</comment>
<comment type="alternative products">
    <event type="alternative splicing"/>
    <isoform>
        <id>Q8R0P4-1</id>
        <name>1</name>
        <sequence type="displayed"/>
    </isoform>
    <isoform>
        <id>Q8R0P4-2</id>
        <name>2</name>
        <sequence type="described" ref="VSP_019270"/>
    </isoform>
</comment>
<comment type="tissue specificity">
    <text evidence="1">Widely expressed, with high expression in the adipose tissue and skeletal muscle (at protein level).</text>
</comment>
<comment type="similarity">
    <text evidence="5">Belongs to the AAMDC family.</text>
</comment>
<sequence length="122" mass="13244">MASPKIASLSWGQMKVQGSTLTYKDCKVWPGGSRAWDWRETGTEHSPGVQPADVKEVAEKGVQTLVIGRGMSEALKVPPSTVEYLEKQGIDVRVLQTEQAVKEYNALVAQGVRVGGVFHSTC</sequence>
<dbReference type="EMBL" id="AK007558">
    <property type="protein sequence ID" value="BAC25178.1"/>
    <property type="molecule type" value="mRNA"/>
</dbReference>
<dbReference type="EMBL" id="AK008195">
    <property type="protein sequence ID" value="BAC25205.1"/>
    <property type="molecule type" value="mRNA"/>
</dbReference>
<dbReference type="EMBL" id="BC026557">
    <property type="protein sequence ID" value="AAH26557.1"/>
    <property type="molecule type" value="mRNA"/>
</dbReference>
<dbReference type="EMBL" id="BC062811">
    <property type="protein sequence ID" value="AAH62811.1"/>
    <property type="molecule type" value="mRNA"/>
</dbReference>
<dbReference type="CCDS" id="CCDS21461.1">
    <molecule id="Q8R0P4-1"/>
</dbReference>
<dbReference type="CCDS" id="CCDS52314.1">
    <molecule id="Q8R0P4-2"/>
</dbReference>
<dbReference type="RefSeq" id="NP_001171416.1">
    <property type="nucleotide sequence ID" value="NM_001177945.1"/>
</dbReference>
<dbReference type="RefSeq" id="NP_001171417.1">
    <property type="nucleotide sequence ID" value="NM_001177946.1"/>
</dbReference>
<dbReference type="RefSeq" id="NP_001171418.1">
    <molecule id="Q8R0P4-2"/>
    <property type="nucleotide sequence ID" value="NM_001177947.1"/>
</dbReference>
<dbReference type="RefSeq" id="NP_899074.2">
    <molecule id="Q8R0P4-1"/>
    <property type="nucleotide sequence ID" value="NM_183251.3"/>
</dbReference>
<dbReference type="RefSeq" id="XP_006508177.1">
    <molecule id="Q8R0P4-1"/>
    <property type="nucleotide sequence ID" value="XM_006508114.5"/>
</dbReference>
<dbReference type="RefSeq" id="XP_006508178.1">
    <property type="nucleotide sequence ID" value="XM_006508115.2"/>
</dbReference>
<dbReference type="SMR" id="Q8R0P4"/>
<dbReference type="BioGRID" id="211346">
    <property type="interactions" value="2"/>
</dbReference>
<dbReference type="FunCoup" id="Q8R0P4">
    <property type="interactions" value="426"/>
</dbReference>
<dbReference type="STRING" id="10090.ENSMUSP00000115672"/>
<dbReference type="iPTMnet" id="Q8R0P4"/>
<dbReference type="PhosphoSitePlus" id="Q8R0P4"/>
<dbReference type="jPOST" id="Q8R0P4"/>
<dbReference type="PaxDb" id="10090-ENSMUSP00000121940"/>
<dbReference type="ProteomicsDB" id="296465">
    <molecule id="Q8R0P4-1"/>
</dbReference>
<dbReference type="ProteomicsDB" id="296466">
    <molecule id="Q8R0P4-2"/>
</dbReference>
<dbReference type="Pumba" id="Q8R0P4"/>
<dbReference type="Antibodypedia" id="31275">
    <property type="antibodies" value="172 antibodies from 18 providers"/>
</dbReference>
<dbReference type="DNASU" id="66273"/>
<dbReference type="Ensembl" id="ENSMUST00000136757.8">
    <molecule id="Q8R0P4-1"/>
    <property type="protein sequence ID" value="ENSMUSP00000121940.2"/>
    <property type="gene ID" value="ENSMUSG00000035642.17"/>
</dbReference>
<dbReference type="Ensembl" id="ENSMUST00000138060.3">
    <molecule id="Q8R0P4-2"/>
    <property type="protein sequence ID" value="ENSMUSP00000116214.2"/>
    <property type="gene ID" value="ENSMUSG00000035642.17"/>
</dbReference>
<dbReference type="GeneID" id="66273"/>
<dbReference type="KEGG" id="mmu:66273"/>
<dbReference type="UCSC" id="uc009ijl.2">
    <molecule id="Q8R0P4-2"/>
    <property type="organism name" value="mouse"/>
</dbReference>
<dbReference type="UCSC" id="uc012fpj.1">
    <molecule id="Q8R0P4-1"/>
    <property type="organism name" value="mouse"/>
</dbReference>
<dbReference type="AGR" id="MGI:1913523"/>
<dbReference type="CTD" id="28971"/>
<dbReference type="MGI" id="MGI:1913523">
    <property type="gene designation" value="Aamdc"/>
</dbReference>
<dbReference type="VEuPathDB" id="HostDB:ENSMUSG00000035642"/>
<dbReference type="eggNOG" id="ENOG502S00Z">
    <property type="taxonomic scope" value="Eukaryota"/>
</dbReference>
<dbReference type="GeneTree" id="ENSGT00390000011958"/>
<dbReference type="HOGENOM" id="CLU_074390_4_0_1"/>
<dbReference type="InParanoid" id="Q8R0P4"/>
<dbReference type="OrthoDB" id="413520at2759"/>
<dbReference type="PhylomeDB" id="Q8R0P4"/>
<dbReference type="TreeFam" id="TF332083"/>
<dbReference type="BioGRID-ORCS" id="66273">
    <property type="hits" value="0 hits in 76 CRISPR screens"/>
</dbReference>
<dbReference type="ChiTaRS" id="Aamdc">
    <property type="organism name" value="mouse"/>
</dbReference>
<dbReference type="PRO" id="PR:Q8R0P4"/>
<dbReference type="Proteomes" id="UP000000589">
    <property type="component" value="Chromosome 7"/>
</dbReference>
<dbReference type="RNAct" id="Q8R0P4">
    <property type="molecule type" value="protein"/>
</dbReference>
<dbReference type="Bgee" id="ENSMUSG00000035642">
    <property type="expression patterns" value="Expressed in muscle of arm and 267 other cell types or tissues"/>
</dbReference>
<dbReference type="ExpressionAtlas" id="Q8R0P4">
    <property type="expression patterns" value="baseline and differential"/>
</dbReference>
<dbReference type="GO" id="GO:0005737">
    <property type="term" value="C:cytoplasm"/>
    <property type="evidence" value="ECO:0000314"/>
    <property type="project" value="UniProtKB"/>
</dbReference>
<dbReference type="GO" id="GO:0043066">
    <property type="term" value="P:negative regulation of apoptotic process"/>
    <property type="evidence" value="ECO:0000315"/>
    <property type="project" value="MGI"/>
</dbReference>
<dbReference type="GO" id="GO:0045600">
    <property type="term" value="P:positive regulation of fat cell differentiation"/>
    <property type="evidence" value="ECO:0000314"/>
    <property type="project" value="MGI"/>
</dbReference>
<dbReference type="GO" id="GO:0045944">
    <property type="term" value="P:positive regulation of transcription by RNA polymerase II"/>
    <property type="evidence" value="ECO:0000314"/>
    <property type="project" value="MGI"/>
</dbReference>
<dbReference type="GO" id="GO:0006366">
    <property type="term" value="P:transcription by RNA polymerase II"/>
    <property type="evidence" value="ECO:0000314"/>
    <property type="project" value="MGI"/>
</dbReference>
<dbReference type="CDD" id="cd05126">
    <property type="entry name" value="Mth938"/>
    <property type="match status" value="1"/>
</dbReference>
<dbReference type="FunFam" id="3.40.1230.10:FF:000001">
    <property type="entry name" value="Adipogenesis-associated, Mth938 domain-containing"/>
    <property type="match status" value="1"/>
</dbReference>
<dbReference type="Gene3D" id="3.40.1230.10">
    <property type="entry name" value="MTH938-like"/>
    <property type="match status" value="1"/>
</dbReference>
<dbReference type="InterPro" id="IPR034096">
    <property type="entry name" value="AAMDC"/>
</dbReference>
<dbReference type="InterPro" id="IPR036748">
    <property type="entry name" value="MTH938-like_sf"/>
</dbReference>
<dbReference type="InterPro" id="IPR007523">
    <property type="entry name" value="NDUFAF3/AAMDC"/>
</dbReference>
<dbReference type="PANTHER" id="PTHR15811">
    <property type="entry name" value="MTH938 DOMAIN-CONTAINING PROTEIN"/>
    <property type="match status" value="1"/>
</dbReference>
<dbReference type="PANTHER" id="PTHR15811:SF5">
    <property type="entry name" value="MTH938 DOMAIN-CONTAINING PROTEIN"/>
    <property type="match status" value="1"/>
</dbReference>
<dbReference type="Pfam" id="PF04430">
    <property type="entry name" value="DUF498"/>
    <property type="match status" value="1"/>
</dbReference>
<dbReference type="SUPFAM" id="SSF64076">
    <property type="entry name" value="MTH938-like"/>
    <property type="match status" value="1"/>
</dbReference>
<reference key="1">
    <citation type="journal article" date="2005" name="Science">
        <title>The transcriptional landscape of the mammalian genome.</title>
        <authorList>
            <person name="Carninci P."/>
            <person name="Kasukawa T."/>
            <person name="Katayama S."/>
            <person name="Gough J."/>
            <person name="Frith M.C."/>
            <person name="Maeda N."/>
            <person name="Oyama R."/>
            <person name="Ravasi T."/>
            <person name="Lenhard B."/>
            <person name="Wells C."/>
            <person name="Kodzius R."/>
            <person name="Shimokawa K."/>
            <person name="Bajic V.B."/>
            <person name="Brenner S.E."/>
            <person name="Batalov S."/>
            <person name="Forrest A.R."/>
            <person name="Zavolan M."/>
            <person name="Davis M.J."/>
            <person name="Wilming L.G."/>
            <person name="Aidinis V."/>
            <person name="Allen J.E."/>
            <person name="Ambesi-Impiombato A."/>
            <person name="Apweiler R."/>
            <person name="Aturaliya R.N."/>
            <person name="Bailey T.L."/>
            <person name="Bansal M."/>
            <person name="Baxter L."/>
            <person name="Beisel K.W."/>
            <person name="Bersano T."/>
            <person name="Bono H."/>
            <person name="Chalk A.M."/>
            <person name="Chiu K.P."/>
            <person name="Choudhary V."/>
            <person name="Christoffels A."/>
            <person name="Clutterbuck D.R."/>
            <person name="Crowe M.L."/>
            <person name="Dalla E."/>
            <person name="Dalrymple B.P."/>
            <person name="de Bono B."/>
            <person name="Della Gatta G."/>
            <person name="di Bernardo D."/>
            <person name="Down T."/>
            <person name="Engstrom P."/>
            <person name="Fagiolini M."/>
            <person name="Faulkner G."/>
            <person name="Fletcher C.F."/>
            <person name="Fukushima T."/>
            <person name="Furuno M."/>
            <person name="Futaki S."/>
            <person name="Gariboldi M."/>
            <person name="Georgii-Hemming P."/>
            <person name="Gingeras T.R."/>
            <person name="Gojobori T."/>
            <person name="Green R.E."/>
            <person name="Gustincich S."/>
            <person name="Harbers M."/>
            <person name="Hayashi Y."/>
            <person name="Hensch T.K."/>
            <person name="Hirokawa N."/>
            <person name="Hill D."/>
            <person name="Huminiecki L."/>
            <person name="Iacono M."/>
            <person name="Ikeo K."/>
            <person name="Iwama A."/>
            <person name="Ishikawa T."/>
            <person name="Jakt M."/>
            <person name="Kanapin A."/>
            <person name="Katoh M."/>
            <person name="Kawasawa Y."/>
            <person name="Kelso J."/>
            <person name="Kitamura H."/>
            <person name="Kitano H."/>
            <person name="Kollias G."/>
            <person name="Krishnan S.P."/>
            <person name="Kruger A."/>
            <person name="Kummerfeld S.K."/>
            <person name="Kurochkin I.V."/>
            <person name="Lareau L.F."/>
            <person name="Lazarevic D."/>
            <person name="Lipovich L."/>
            <person name="Liu J."/>
            <person name="Liuni S."/>
            <person name="McWilliam S."/>
            <person name="Madan Babu M."/>
            <person name="Madera M."/>
            <person name="Marchionni L."/>
            <person name="Matsuda H."/>
            <person name="Matsuzawa S."/>
            <person name="Miki H."/>
            <person name="Mignone F."/>
            <person name="Miyake S."/>
            <person name="Morris K."/>
            <person name="Mottagui-Tabar S."/>
            <person name="Mulder N."/>
            <person name="Nakano N."/>
            <person name="Nakauchi H."/>
            <person name="Ng P."/>
            <person name="Nilsson R."/>
            <person name="Nishiguchi S."/>
            <person name="Nishikawa S."/>
            <person name="Nori F."/>
            <person name="Ohara O."/>
            <person name="Okazaki Y."/>
            <person name="Orlando V."/>
            <person name="Pang K.C."/>
            <person name="Pavan W.J."/>
            <person name="Pavesi G."/>
            <person name="Pesole G."/>
            <person name="Petrovsky N."/>
            <person name="Piazza S."/>
            <person name="Reed J."/>
            <person name="Reid J.F."/>
            <person name="Ring B.Z."/>
            <person name="Ringwald M."/>
            <person name="Rost B."/>
            <person name="Ruan Y."/>
            <person name="Salzberg S.L."/>
            <person name="Sandelin A."/>
            <person name="Schneider C."/>
            <person name="Schoenbach C."/>
            <person name="Sekiguchi K."/>
            <person name="Semple C.A."/>
            <person name="Seno S."/>
            <person name="Sessa L."/>
            <person name="Sheng Y."/>
            <person name="Shibata Y."/>
            <person name="Shimada H."/>
            <person name="Shimada K."/>
            <person name="Silva D."/>
            <person name="Sinclair B."/>
            <person name="Sperling S."/>
            <person name="Stupka E."/>
            <person name="Sugiura K."/>
            <person name="Sultana R."/>
            <person name="Takenaka Y."/>
            <person name="Taki K."/>
            <person name="Tammoja K."/>
            <person name="Tan S.L."/>
            <person name="Tang S."/>
            <person name="Taylor M.S."/>
            <person name="Tegner J."/>
            <person name="Teichmann S.A."/>
            <person name="Ueda H.R."/>
            <person name="van Nimwegen E."/>
            <person name="Verardo R."/>
            <person name="Wei C.L."/>
            <person name="Yagi K."/>
            <person name="Yamanishi H."/>
            <person name="Zabarovsky E."/>
            <person name="Zhu S."/>
            <person name="Zimmer A."/>
            <person name="Hide W."/>
            <person name="Bult C."/>
            <person name="Grimmond S.M."/>
            <person name="Teasdale R.D."/>
            <person name="Liu E.T."/>
            <person name="Brusic V."/>
            <person name="Quackenbush J."/>
            <person name="Wahlestedt C."/>
            <person name="Mattick J.S."/>
            <person name="Hume D.A."/>
            <person name="Kai C."/>
            <person name="Sasaki D."/>
            <person name="Tomaru Y."/>
            <person name="Fukuda S."/>
            <person name="Kanamori-Katayama M."/>
            <person name="Suzuki M."/>
            <person name="Aoki J."/>
            <person name="Arakawa T."/>
            <person name="Iida J."/>
            <person name="Imamura K."/>
            <person name="Itoh M."/>
            <person name="Kato T."/>
            <person name="Kawaji H."/>
            <person name="Kawagashira N."/>
            <person name="Kawashima T."/>
            <person name="Kojima M."/>
            <person name="Kondo S."/>
            <person name="Konno H."/>
            <person name="Nakano K."/>
            <person name="Ninomiya N."/>
            <person name="Nishio T."/>
            <person name="Okada M."/>
            <person name="Plessy C."/>
            <person name="Shibata K."/>
            <person name="Shiraki T."/>
            <person name="Suzuki S."/>
            <person name="Tagami M."/>
            <person name="Waki K."/>
            <person name="Watahiki A."/>
            <person name="Okamura-Oho Y."/>
            <person name="Suzuki H."/>
            <person name="Kawai J."/>
            <person name="Hayashizaki Y."/>
        </authorList>
    </citation>
    <scope>NUCLEOTIDE SEQUENCE [LARGE SCALE MRNA] (ISOFORM 2)</scope>
    <source>
        <strain>C57BL/6J</strain>
        <tissue>Pancreas</tissue>
        <tissue>Small intestine</tissue>
    </source>
</reference>
<reference key="2">
    <citation type="journal article" date="2004" name="Genome Res.">
        <title>The status, quality, and expansion of the NIH full-length cDNA project: the Mammalian Gene Collection (MGC).</title>
        <authorList>
            <consortium name="The MGC Project Team"/>
        </authorList>
    </citation>
    <scope>NUCLEOTIDE SEQUENCE [LARGE SCALE MRNA] (ISOFORMS 1 AND 2)</scope>
    <source>
        <strain>FVB/N</strain>
        <tissue>Mammary cancer</tissue>
        <tissue>Thymus</tissue>
    </source>
</reference>
<reference key="3">
    <citation type="journal article" date="2010" name="Cell">
        <title>A tissue-specific atlas of mouse protein phosphorylation and expression.</title>
        <authorList>
            <person name="Huttlin E.L."/>
            <person name="Jedrychowski M.P."/>
            <person name="Elias J.E."/>
            <person name="Goswami T."/>
            <person name="Rad R."/>
            <person name="Beausoleil S.A."/>
            <person name="Villen J."/>
            <person name="Haas W."/>
            <person name="Sowa M.E."/>
            <person name="Gygi S.P."/>
        </authorList>
    </citation>
    <scope>IDENTIFICATION BY MASS SPECTROMETRY [LARGE SCALE ANALYSIS]</scope>
    <source>
        <tissue>Brain</tissue>
        <tissue>Brown adipose tissue</tissue>
        <tissue>Heart</tissue>
        <tissue>Kidney</tissue>
        <tissue>Lung</tissue>
        <tissue>Pancreas</tissue>
        <tissue>Spleen</tissue>
        <tissue>Testis</tissue>
    </source>
</reference>
<reference key="4">
    <citation type="journal article" date="2011" name="Front. Biosci.">
        <title>Involvement of LOC66273 isoform 2, a novel Mth938 containing protein, in MAPK pathway.</title>
        <authorList>
            <person name="Wang H."/>
            <person name="Ma X."/>
            <person name="Zhang H."/>
            <person name="Zang J."/>
            <person name="Hu S."/>
            <person name="Li D."/>
        </authorList>
    </citation>
    <scope>SUBCELLULAR LOCATION</scope>
    <scope>TISSUE SPECIFICITY</scope>
</reference>
<reference key="5">
    <citation type="journal article" date="2012" name="J. Nutr.">
        <title>LOC66273 isoform 2, a novel protein highly expressed in white adipose tissue, induces adipogenesis in 3T3-L1 cells.</title>
        <authorList>
            <person name="Ma X."/>
            <person name="Ding W."/>
            <person name="Wang J."/>
            <person name="Wu G."/>
            <person name="Zhang H."/>
            <person name="Yin J."/>
            <person name="Zhou L."/>
            <person name="Li D."/>
        </authorList>
    </citation>
    <scope>FUNCTION</scope>
</reference>
<name>AAMDC_MOUSE</name>
<protein>
    <recommendedName>
        <fullName>Mth938 domain-containing protein</fullName>
    </recommendedName>
    <alternativeName>
        <fullName>LI2</fullName>
    </alternativeName>
</protein>
<feature type="chain" id="PRO_0000239815" description="Mth938 domain-containing protein">
    <location>
        <begin position="1"/>
        <end position="122"/>
    </location>
</feature>
<feature type="region of interest" description="MTH138-like domain">
    <location>
        <begin position="6"/>
        <end position="122"/>
    </location>
</feature>
<feature type="splice variant" id="VSP_019270" description="In isoform 2." evidence="3 4">
    <location>
        <begin position="45"/>
        <end position="76"/>
    </location>
</feature>